<reference key="1">
    <citation type="submission" date="2004-06" db="EMBL/GenBank/DDBJ databases">
        <authorList>
            <consortium name="NIH - Xenopus Gene Collection (XGC) project"/>
        </authorList>
    </citation>
    <scope>NUCLEOTIDE SEQUENCE [LARGE SCALE MRNA]</scope>
    <source>
        <tissue>Eye</tissue>
    </source>
</reference>
<name>CE024_XENLA</name>
<keyword id="KW-1185">Reference proteome</keyword>
<comment type="similarity">
    <text evidence="2">Belongs to the UPF0461 family.</text>
</comment>
<accession>Q6INB0</accession>
<sequence>MMRPVSSNNVAFCASGKSSCLSQDPMRGVDQFGLYPTQQSKFSHTVTHKNISCQTQEAINETHLQTSTSRDLDTKSDLKKKKNVGRSGKRGRPSGTTKSAGYRTSTGRPLGTTKAAGFKTSPGRPLGTTKAAGYKVSPGRPPGKKQQALMCSSDA</sequence>
<protein>
    <recommendedName>
        <fullName>UPF0461 protein C5orf24 homolog</fullName>
    </recommendedName>
</protein>
<evidence type="ECO:0000256" key="1">
    <source>
        <dbReference type="SAM" id="MobiDB-lite"/>
    </source>
</evidence>
<evidence type="ECO:0000305" key="2"/>
<organism>
    <name type="scientific">Xenopus laevis</name>
    <name type="common">African clawed frog</name>
    <dbReference type="NCBI Taxonomy" id="8355"/>
    <lineage>
        <taxon>Eukaryota</taxon>
        <taxon>Metazoa</taxon>
        <taxon>Chordata</taxon>
        <taxon>Craniata</taxon>
        <taxon>Vertebrata</taxon>
        <taxon>Euteleostomi</taxon>
        <taxon>Amphibia</taxon>
        <taxon>Batrachia</taxon>
        <taxon>Anura</taxon>
        <taxon>Pipoidea</taxon>
        <taxon>Pipidae</taxon>
        <taxon>Xenopodinae</taxon>
        <taxon>Xenopus</taxon>
        <taxon>Xenopus</taxon>
    </lineage>
</organism>
<proteinExistence type="evidence at transcript level"/>
<feature type="chain" id="PRO_0000295712" description="UPF0461 protein C5orf24 homolog">
    <location>
        <begin position="1"/>
        <end position="155"/>
    </location>
</feature>
<feature type="region of interest" description="Disordered" evidence="1">
    <location>
        <begin position="60"/>
        <end position="155"/>
    </location>
</feature>
<feature type="compositionally biased region" description="Polar residues" evidence="1">
    <location>
        <begin position="60"/>
        <end position="69"/>
    </location>
</feature>
<feature type="compositionally biased region" description="Basic residues" evidence="1">
    <location>
        <begin position="78"/>
        <end position="92"/>
    </location>
</feature>
<feature type="compositionally biased region" description="Polar residues" evidence="1">
    <location>
        <begin position="94"/>
        <end position="107"/>
    </location>
</feature>
<dbReference type="EMBL" id="BC072373">
    <property type="protein sequence ID" value="AAH72373.1"/>
    <property type="molecule type" value="mRNA"/>
</dbReference>
<dbReference type="RefSeq" id="NP_001085049.1">
    <property type="nucleotide sequence ID" value="NM_001091580.1"/>
</dbReference>
<dbReference type="DNASU" id="432117"/>
<dbReference type="AGR" id="Xenbase:XB-GENE-6079037"/>
<dbReference type="Xenbase" id="XB-GENE-6079037">
    <property type="gene designation" value="c3h5orf24.L"/>
</dbReference>
<dbReference type="Proteomes" id="UP000186698">
    <property type="component" value="Unplaced"/>
</dbReference>
<dbReference type="Bgee" id="432117">
    <property type="expression patterns" value="Expressed in spleen and 19 other cell types or tissues"/>
</dbReference>
<dbReference type="InterPro" id="IPR040419">
    <property type="entry name" value="DUF5568"/>
</dbReference>
<dbReference type="PANTHER" id="PTHR31894">
    <property type="entry name" value="UPF0461 PROTEIN C5ORF24"/>
    <property type="match status" value="1"/>
</dbReference>
<dbReference type="PANTHER" id="PTHR31894:SF0">
    <property type="entry name" value="UPF0461 PROTEIN C5ORF24"/>
    <property type="match status" value="1"/>
</dbReference>
<dbReference type="Pfam" id="PF17724">
    <property type="entry name" value="DUF5568"/>
    <property type="match status" value="1"/>
</dbReference>